<reference key="1">
    <citation type="journal article" date="2004" name="Nat. Genet.">
        <title>Complete sequencing and characterization of 21,243 full-length human cDNAs.</title>
        <authorList>
            <person name="Ota T."/>
            <person name="Suzuki Y."/>
            <person name="Nishikawa T."/>
            <person name="Otsuki T."/>
            <person name="Sugiyama T."/>
            <person name="Irie R."/>
            <person name="Wakamatsu A."/>
            <person name="Hayashi K."/>
            <person name="Sato H."/>
            <person name="Nagai K."/>
            <person name="Kimura K."/>
            <person name="Makita H."/>
            <person name="Sekine M."/>
            <person name="Obayashi M."/>
            <person name="Nishi T."/>
            <person name="Shibahara T."/>
            <person name="Tanaka T."/>
            <person name="Ishii S."/>
            <person name="Yamamoto J."/>
            <person name="Saito K."/>
            <person name="Kawai Y."/>
            <person name="Isono Y."/>
            <person name="Nakamura Y."/>
            <person name="Nagahari K."/>
            <person name="Murakami K."/>
            <person name="Yasuda T."/>
            <person name="Iwayanagi T."/>
            <person name="Wagatsuma M."/>
            <person name="Shiratori A."/>
            <person name="Sudo H."/>
            <person name="Hosoiri T."/>
            <person name="Kaku Y."/>
            <person name="Kodaira H."/>
            <person name="Kondo H."/>
            <person name="Sugawara M."/>
            <person name="Takahashi M."/>
            <person name="Kanda K."/>
            <person name="Yokoi T."/>
            <person name="Furuya T."/>
            <person name="Kikkawa E."/>
            <person name="Omura Y."/>
            <person name="Abe K."/>
            <person name="Kamihara K."/>
            <person name="Katsuta N."/>
            <person name="Sato K."/>
            <person name="Tanikawa M."/>
            <person name="Yamazaki M."/>
            <person name="Ninomiya K."/>
            <person name="Ishibashi T."/>
            <person name="Yamashita H."/>
            <person name="Murakawa K."/>
            <person name="Fujimori K."/>
            <person name="Tanai H."/>
            <person name="Kimata M."/>
            <person name="Watanabe M."/>
            <person name="Hiraoka S."/>
            <person name="Chiba Y."/>
            <person name="Ishida S."/>
            <person name="Ono Y."/>
            <person name="Takiguchi S."/>
            <person name="Watanabe S."/>
            <person name="Yosida M."/>
            <person name="Hotuta T."/>
            <person name="Kusano J."/>
            <person name="Kanehori K."/>
            <person name="Takahashi-Fujii A."/>
            <person name="Hara H."/>
            <person name="Tanase T.-O."/>
            <person name="Nomura Y."/>
            <person name="Togiya S."/>
            <person name="Komai F."/>
            <person name="Hara R."/>
            <person name="Takeuchi K."/>
            <person name="Arita M."/>
            <person name="Imose N."/>
            <person name="Musashino K."/>
            <person name="Yuuki H."/>
            <person name="Oshima A."/>
            <person name="Sasaki N."/>
            <person name="Aotsuka S."/>
            <person name="Yoshikawa Y."/>
            <person name="Matsunawa H."/>
            <person name="Ichihara T."/>
            <person name="Shiohata N."/>
            <person name="Sano S."/>
            <person name="Moriya S."/>
            <person name="Momiyama H."/>
            <person name="Satoh N."/>
            <person name="Takami S."/>
            <person name="Terashima Y."/>
            <person name="Suzuki O."/>
            <person name="Nakagawa S."/>
            <person name="Senoh A."/>
            <person name="Mizoguchi H."/>
            <person name="Goto Y."/>
            <person name="Shimizu F."/>
            <person name="Wakebe H."/>
            <person name="Hishigaki H."/>
            <person name="Watanabe T."/>
            <person name="Sugiyama A."/>
            <person name="Takemoto M."/>
            <person name="Kawakami B."/>
            <person name="Yamazaki M."/>
            <person name="Watanabe K."/>
            <person name="Kumagai A."/>
            <person name="Itakura S."/>
            <person name="Fukuzumi Y."/>
            <person name="Fujimori Y."/>
            <person name="Komiyama M."/>
            <person name="Tashiro H."/>
            <person name="Tanigami A."/>
            <person name="Fujiwara T."/>
            <person name="Ono T."/>
            <person name="Yamada K."/>
            <person name="Fujii Y."/>
            <person name="Ozaki K."/>
            <person name="Hirao M."/>
            <person name="Ohmori Y."/>
            <person name="Kawabata A."/>
            <person name="Hikiji T."/>
            <person name="Kobatake N."/>
            <person name="Inagaki H."/>
            <person name="Ikema Y."/>
            <person name="Okamoto S."/>
            <person name="Okitani R."/>
            <person name="Kawakami T."/>
            <person name="Noguchi S."/>
            <person name="Itoh T."/>
            <person name="Shigeta K."/>
            <person name="Senba T."/>
            <person name="Matsumura K."/>
            <person name="Nakajima Y."/>
            <person name="Mizuno T."/>
            <person name="Morinaga M."/>
            <person name="Sasaki M."/>
            <person name="Togashi T."/>
            <person name="Oyama M."/>
            <person name="Hata H."/>
            <person name="Watanabe M."/>
            <person name="Komatsu T."/>
            <person name="Mizushima-Sugano J."/>
            <person name="Satoh T."/>
            <person name="Shirai Y."/>
            <person name="Takahashi Y."/>
            <person name="Nakagawa K."/>
            <person name="Okumura K."/>
            <person name="Nagase T."/>
            <person name="Nomura N."/>
            <person name="Kikuchi H."/>
            <person name="Masuho Y."/>
            <person name="Yamashita R."/>
            <person name="Nakai K."/>
            <person name="Yada T."/>
            <person name="Nakamura Y."/>
            <person name="Ohara O."/>
            <person name="Isogai T."/>
            <person name="Sugano S."/>
        </authorList>
    </citation>
    <scope>NUCLEOTIDE SEQUENCE [LARGE SCALE MRNA] (ISOFORM 1)</scope>
    <source>
        <tissue>Colon</tissue>
    </source>
</reference>
<reference key="2">
    <citation type="submission" date="2002-07" db="EMBL/GenBank/DDBJ databases">
        <authorList>
            <person name="Guo J.H."/>
            <person name="Yu L."/>
        </authorList>
    </citation>
    <scope>NUCLEOTIDE SEQUENCE [LARGE SCALE MRNA] (ISOFORM 2)</scope>
    <source>
        <tissue>Ovary</tissue>
    </source>
</reference>
<reference key="3">
    <citation type="journal article" date="2005" name="Nature">
        <title>Generation and annotation of the DNA sequences of human chromosomes 2 and 4.</title>
        <authorList>
            <person name="Hillier L.W."/>
            <person name="Graves T.A."/>
            <person name="Fulton R.S."/>
            <person name="Fulton L.A."/>
            <person name="Pepin K.H."/>
            <person name="Minx P."/>
            <person name="Wagner-McPherson C."/>
            <person name="Layman D."/>
            <person name="Wylie K."/>
            <person name="Sekhon M."/>
            <person name="Becker M.C."/>
            <person name="Fewell G.A."/>
            <person name="Delehaunty K.D."/>
            <person name="Miner T.L."/>
            <person name="Nash W.E."/>
            <person name="Kremitzki C."/>
            <person name="Oddy L."/>
            <person name="Du H."/>
            <person name="Sun H."/>
            <person name="Bradshaw-Cordum H."/>
            <person name="Ali J."/>
            <person name="Carter J."/>
            <person name="Cordes M."/>
            <person name="Harris A."/>
            <person name="Isak A."/>
            <person name="van Brunt A."/>
            <person name="Nguyen C."/>
            <person name="Du F."/>
            <person name="Courtney L."/>
            <person name="Kalicki J."/>
            <person name="Ozersky P."/>
            <person name="Abbott S."/>
            <person name="Armstrong J."/>
            <person name="Belter E.A."/>
            <person name="Caruso L."/>
            <person name="Cedroni M."/>
            <person name="Cotton M."/>
            <person name="Davidson T."/>
            <person name="Desai A."/>
            <person name="Elliott G."/>
            <person name="Erb T."/>
            <person name="Fronick C."/>
            <person name="Gaige T."/>
            <person name="Haakenson W."/>
            <person name="Haglund K."/>
            <person name="Holmes A."/>
            <person name="Harkins R."/>
            <person name="Kim K."/>
            <person name="Kruchowski S.S."/>
            <person name="Strong C.M."/>
            <person name="Grewal N."/>
            <person name="Goyea E."/>
            <person name="Hou S."/>
            <person name="Levy A."/>
            <person name="Martinka S."/>
            <person name="Mead K."/>
            <person name="McLellan M.D."/>
            <person name="Meyer R."/>
            <person name="Randall-Maher J."/>
            <person name="Tomlinson C."/>
            <person name="Dauphin-Kohlberg S."/>
            <person name="Kozlowicz-Reilly A."/>
            <person name="Shah N."/>
            <person name="Swearengen-Shahid S."/>
            <person name="Snider J."/>
            <person name="Strong J.T."/>
            <person name="Thompson J."/>
            <person name="Yoakum M."/>
            <person name="Leonard S."/>
            <person name="Pearman C."/>
            <person name="Trani L."/>
            <person name="Radionenko M."/>
            <person name="Waligorski J.E."/>
            <person name="Wang C."/>
            <person name="Rock S.M."/>
            <person name="Tin-Wollam A.-M."/>
            <person name="Maupin R."/>
            <person name="Latreille P."/>
            <person name="Wendl M.C."/>
            <person name="Yang S.-P."/>
            <person name="Pohl C."/>
            <person name="Wallis J.W."/>
            <person name="Spieth J."/>
            <person name="Bieri T.A."/>
            <person name="Berkowicz N."/>
            <person name="Nelson J.O."/>
            <person name="Osborne J."/>
            <person name="Ding L."/>
            <person name="Meyer R."/>
            <person name="Sabo A."/>
            <person name="Shotland Y."/>
            <person name="Sinha P."/>
            <person name="Wohldmann P.E."/>
            <person name="Cook L.L."/>
            <person name="Hickenbotham M.T."/>
            <person name="Eldred J."/>
            <person name="Williams D."/>
            <person name="Jones T.A."/>
            <person name="She X."/>
            <person name="Ciccarelli F.D."/>
            <person name="Izaurralde E."/>
            <person name="Taylor J."/>
            <person name="Schmutz J."/>
            <person name="Myers R.M."/>
            <person name="Cox D.R."/>
            <person name="Huang X."/>
            <person name="McPherson J.D."/>
            <person name="Mardis E.R."/>
            <person name="Clifton S.W."/>
            <person name="Warren W.C."/>
            <person name="Chinwalla A.T."/>
            <person name="Eddy S.R."/>
            <person name="Marra M.A."/>
            <person name="Ovcharenko I."/>
            <person name="Furey T.S."/>
            <person name="Miller W."/>
            <person name="Eichler E.E."/>
            <person name="Bork P."/>
            <person name="Suyama M."/>
            <person name="Torrents D."/>
            <person name="Waterston R.H."/>
            <person name="Wilson R.K."/>
        </authorList>
    </citation>
    <scope>NUCLEOTIDE SEQUENCE [LARGE SCALE GENOMIC DNA]</scope>
</reference>
<reference key="4">
    <citation type="submission" date="2005-09" db="EMBL/GenBank/DDBJ databases">
        <authorList>
            <person name="Mural R.J."/>
            <person name="Istrail S."/>
            <person name="Sutton G.G."/>
            <person name="Florea L."/>
            <person name="Halpern A.L."/>
            <person name="Mobarry C.M."/>
            <person name="Lippert R."/>
            <person name="Walenz B."/>
            <person name="Shatkay H."/>
            <person name="Dew I."/>
            <person name="Miller J.R."/>
            <person name="Flanigan M.J."/>
            <person name="Edwards N.J."/>
            <person name="Bolanos R."/>
            <person name="Fasulo D."/>
            <person name="Halldorsson B.V."/>
            <person name="Hannenhalli S."/>
            <person name="Turner R."/>
            <person name="Yooseph S."/>
            <person name="Lu F."/>
            <person name="Nusskern D.R."/>
            <person name="Shue B.C."/>
            <person name="Zheng X.H."/>
            <person name="Zhong F."/>
            <person name="Delcher A.L."/>
            <person name="Huson D.H."/>
            <person name="Kravitz S.A."/>
            <person name="Mouchard L."/>
            <person name="Reinert K."/>
            <person name="Remington K.A."/>
            <person name="Clark A.G."/>
            <person name="Waterman M.S."/>
            <person name="Eichler E.E."/>
            <person name="Adams M.D."/>
            <person name="Hunkapiller M.W."/>
            <person name="Myers E.W."/>
            <person name="Venter J.C."/>
        </authorList>
    </citation>
    <scope>NUCLEOTIDE SEQUENCE [LARGE SCALE GENOMIC DNA]</scope>
</reference>
<reference key="5">
    <citation type="journal article" date="2004" name="Genome Res.">
        <title>The status, quality, and expansion of the NIH full-length cDNA project: the Mammalian Gene Collection (MGC).</title>
        <authorList>
            <consortium name="The MGC Project Team"/>
        </authorList>
    </citation>
    <scope>NUCLEOTIDE SEQUENCE [LARGE SCALE MRNA] (ISOFORMS 1; 3; 4 AND 5)</scope>
    <source>
        <tissue>Brain</tissue>
        <tissue>Ovary</tissue>
    </source>
</reference>
<reference key="6">
    <citation type="journal article" date="2009" name="Chem. Biol.">
        <title>Docking motif-guided mapping of the interactome of protein phosphatase-1.</title>
        <authorList>
            <person name="Hendrickx A."/>
            <person name="Beullens M."/>
            <person name="Ceulemans H."/>
            <person name="Den Abt T."/>
            <person name="Van Eynde A."/>
            <person name="Nicolaescu E."/>
            <person name="Lesage B."/>
            <person name="Bollen M."/>
        </authorList>
    </citation>
    <scope>INTERACTION WITH PPP1CA</scope>
</reference>
<reference key="7">
    <citation type="journal article" date="2011" name="BMC Syst. Biol.">
        <title>Initial characterization of the human central proteome.</title>
        <authorList>
            <person name="Burkard T.R."/>
            <person name="Planyavsky M."/>
            <person name="Kaupe I."/>
            <person name="Breitwieser F.P."/>
            <person name="Buerckstuemmer T."/>
            <person name="Bennett K.L."/>
            <person name="Superti-Furga G."/>
            <person name="Colinge J."/>
        </authorList>
    </citation>
    <scope>IDENTIFICATION BY MASS SPECTROMETRY [LARGE SCALE ANALYSIS]</scope>
</reference>
<reference key="8">
    <citation type="journal article" date="2019" name="Hum. Mutat.">
        <title>Biallelic loss of function variants in PPP1R21 cause a neurodevelopmental syndrome with impaired endocytic function.</title>
        <authorList>
            <person name="Rehman A.U."/>
            <person name="Najafi M."/>
            <person name="Kambouris M."/>
            <person name="Al-Gazali L."/>
            <person name="Makrythanasis P."/>
            <person name="Rad A."/>
            <person name="Maroofian R."/>
            <person name="Rajab A."/>
            <person name="Stark Z."/>
            <person name="Hunter J.V."/>
            <person name="Bakey Z."/>
            <person name="Tokita M.J."/>
            <person name="He W."/>
            <person name="Vetrini F."/>
            <person name="Petersen A."/>
            <person name="Santoni F.A."/>
            <person name="Hamamy H."/>
            <person name="Wu K."/>
            <person name="Al-Jasmi F."/>
            <person name="Helmstaedter M."/>
            <person name="Arnold S.J."/>
            <person name="Xia F."/>
            <person name="Richmond C."/>
            <person name="Liu P."/>
            <person name="Karimiani E.G."/>
            <person name="Karami Madani G."/>
            <person name="Lunke S."/>
            <person name="El-Shanti H."/>
            <person name="Eng C.M."/>
            <person name="Antonarakis S.E."/>
            <person name="Hertecant J."/>
            <person name="Walkiewicz M."/>
            <person name="Yang Y."/>
            <person name="Schmidts M."/>
        </authorList>
    </citation>
    <scope>SUBCELLULAR LOCATION</scope>
    <scope>INVOLVEMENT NEDHFBA</scope>
    <scope>FUNCTION</scope>
</reference>
<reference key="9">
    <citation type="journal article" date="2023" name="Mol. Cell">
        <title>The Rab5 effector FERRY links early endosomes with mRNA localization.</title>
        <authorList>
            <person name="Schuhmacher J.S."/>
            <person name="Tom Dieck S."/>
            <person name="Christoforidis S."/>
            <person name="Landerer C."/>
            <person name="Davila Gallesio J."/>
            <person name="Hersemann L."/>
            <person name="Seifert S."/>
            <person name="Schaefer R."/>
            <person name="Giner A."/>
            <person name="Toth-Petroczy A."/>
            <person name="Kalaidzidis Y."/>
            <person name="Bohnsack K.E."/>
            <person name="Bohnsack M.T."/>
            <person name="Schuman E.M."/>
            <person name="Zerial M."/>
        </authorList>
    </citation>
    <scope>SUBUNIT</scope>
    <scope>IDENTIFICATION IN THE FERRY COMPLEX</scope>
    <scope>FUNCTION</scope>
    <scope>SUBCELLULAR LOCATION</scope>
    <scope>INTERACTION WITH RAB5A</scope>
</reference>
<reference evidence="17" key="10">
    <citation type="journal article" date="2023" name="Mol. Cell">
        <title>Structural basis of mRNA binding by the human FERRY Rab5 effector complex.</title>
        <authorList>
            <person name="Quentin D."/>
            <person name="Schuhmacher J.S."/>
            <person name="Klink B.U."/>
            <person name="Lauer J."/>
            <person name="Shaikh T.R."/>
            <person name="Huis In 't Veld P.J."/>
            <person name="Welp L.M."/>
            <person name="Urlaub H."/>
            <person name="Zerial M."/>
            <person name="Raunser S."/>
        </authorList>
    </citation>
    <scope>STRUCTURE BY ELECTRON MICROSCOPY (4.00 ANGSTROMS) OF FERRY COMPLEX</scope>
    <scope>SUBUNIT</scope>
    <scope>FUNCTION</scope>
    <scope>INTERACTION WITH RAB5A</scope>
    <scope>CHARACTERIZATION OF VARIANT NEDHFBA 697-ARG--ARG-780 DEL AND 728-GLN--ARG-780 DEL</scope>
</reference>
<reference key="11">
    <citation type="journal article" date="2018" name="Clin. Genet.">
        <title>PPP1R21 homozygous null variants associated with developmental delay, muscle weakness, distinctive facial features, and brain abnormalities.</title>
        <authorList>
            <person name="Suleiman J."/>
            <person name="Al Hashem A.M."/>
            <person name="Tabarki B."/>
            <person name="Al-Thihli K."/>
            <person name="Bi W."/>
            <person name="El-Hattab A.W."/>
        </authorList>
    </citation>
    <scope>VARIANTS NEDHFBA 143-ARG--ARG-780 DEL AND 697-ARG--ARG-780 DEL</scope>
    <scope>INVOLVEMENT IN NEDHFBA</scope>
</reference>
<reference key="12">
    <citation type="journal article" date="2017" name="Hum. Genet.">
        <title>Expanding the genetic heterogeneity of intellectual disability.</title>
        <authorList>
            <person name="Anazi S."/>
            <person name="Maddirevula S."/>
            <person name="Salpietro V."/>
            <person name="Asi Y.T."/>
            <person name="Alsahli S."/>
            <person name="Alhashem A."/>
            <person name="Shamseldin H.E."/>
            <person name="AlZahrani F."/>
            <person name="Patel N."/>
            <person name="Ibrahim N."/>
            <person name="Abdulwahab F.M."/>
            <person name="Hashem M."/>
            <person name="Alhashmi N."/>
            <person name="Al Murshedi F."/>
            <person name="Al Kindy A."/>
            <person name="Alshaer A."/>
            <person name="Rumayyan A."/>
            <person name="Al Tala S."/>
            <person name="Kurdi W."/>
            <person name="Alsaman A."/>
            <person name="Alasmari A."/>
            <person name="Banu S."/>
            <person name="Sultan T."/>
            <person name="Saleh M.M."/>
            <person name="Alkuraya H."/>
            <person name="Salih M.A."/>
            <person name="Aldhalaan H."/>
            <person name="Ben-Omran T."/>
            <person name="Al Musafri F."/>
            <person name="Ali R."/>
            <person name="Suleiman J."/>
            <person name="Tabarki B."/>
            <person name="El-Hattab A.W."/>
            <person name="Bupp C."/>
            <person name="Alfadhel M."/>
            <person name="Al Tassan N."/>
            <person name="Monies D."/>
            <person name="Arold S.T."/>
            <person name="Abouelhoda M."/>
            <person name="Lashley T."/>
            <person name="Houlden H."/>
            <person name="Faqeih E."/>
            <person name="Alkuraya F.S."/>
        </authorList>
    </citation>
    <scope>VARIANT NEDHFBA 728-GLN--ARG-780 DEL</scope>
    <scope>INVOLVEMENT IN NEDHFBA</scope>
</reference>
<reference key="13">
    <citation type="journal article" date="2018" name="Hum. Genet.">
        <title>Correction to: Expanding the genetic heterogeneity of intellectual disability.</title>
        <authorList>
            <person name="Anazi S."/>
            <person name="Maddirevula S."/>
            <person name="Salpietro V."/>
            <person name="Asi Y.T."/>
            <person name="Alsahli S."/>
            <person name="Alhashem A."/>
            <person name="Shamseldin H.E."/>
            <person name="AlZahrani F."/>
            <person name="Patel N."/>
            <person name="Ibrahim N."/>
            <person name="Abdulwahab F.M."/>
            <person name="Hashem M."/>
            <person name="Alhashmi N."/>
            <person name="Al Murshedi F."/>
            <person name="Al Kindy A."/>
            <person name="Alshaer A."/>
            <person name="Rumayyan A."/>
            <person name="Al Tala S."/>
            <person name="Kurdi W."/>
            <person name="Alsaman A."/>
            <person name="Alasmari A."/>
            <person name="Banu S."/>
            <person name="Sultan T."/>
            <person name="Saleh M.M."/>
            <person name="Alkuraya H."/>
            <person name="Salih M.A."/>
            <person name="Aldhalaan H."/>
            <person name="Ben-Omran T."/>
            <person name="Al Musafri F."/>
            <person name="Ali R."/>
            <person name="Suleiman J."/>
            <person name="Tabarki B."/>
            <person name="El-Hattab A.W."/>
            <person name="Bupp C."/>
            <person name="Alfadhel M."/>
            <person name="Al Tassan N."/>
            <person name="Monies D."/>
            <person name="Arold S.T."/>
            <person name="Abouelhoda M."/>
            <person name="Lashley T."/>
            <person name="Houlden H."/>
            <person name="Faqeih E."/>
            <person name="Alkuraya F.S."/>
        </authorList>
    </citation>
    <scope>ERRATUM OF PUBMED:28940097</scope>
</reference>
<reference key="14">
    <citation type="journal article" date="2020" name="Am. J. Med. Genet. A">
        <title>PPP1R21-related syndromic intellectual disability: Report of an adult patient and review.</title>
        <authorList>
            <person name="Loddo S."/>
            <person name="Alesi V."/>
            <person name="Radio F.C."/>
            <person name="Genovese S."/>
            <person name="Di Tommaso S."/>
            <person name="Calvieri G."/>
            <person name="Orlando V."/>
            <person name="Bertini E."/>
            <person name="Dentici M.L."/>
            <person name="Novelli A."/>
            <person name="Dallapiccola B."/>
        </authorList>
    </citation>
    <scope>VARIANT NEDHFBA 65-ARG--ARG-780 DEL</scope>
    <scope>INVOLVEMENT IN NEDHFBA</scope>
</reference>
<reference key="15">
    <citation type="journal article" date="2024" name="Clin. Genet.">
        <title>Expanding the phenotype of PPP1R21-related neurodevelopmental disorder.</title>
        <authorList>
            <person name="Almannai M."/>
            <person name="Marafi D."/>
            <person name="Zaki M.S."/>
            <person name="Maroofian R."/>
            <person name="Efthymiou S."/>
            <person name="Saadi N.W."/>
            <person name="Filimban B."/>
            <person name="Dafsari H.S."/>
            <person name="Rahman F."/>
            <person name="Maqbool S."/>
            <person name="Faqeih E."/>
            <person name="Al Mutairi F."/>
            <person name="Alsharhan H."/>
            <person name="Abdelaty O."/>
            <person name="Bin-Hasan S."/>
            <person name="Duan R."/>
            <person name="Noureldeen M.M."/>
            <person name="Alqattan A."/>
            <person name="Houlden H."/>
            <person name="Hunter J.V."/>
            <person name="Posey J.E."/>
            <person name="Lupski J.R."/>
            <person name="El-Hattab A.W."/>
        </authorList>
    </citation>
    <scope>VARIANTS NEDHFBA ARG-75; 143-ARG--ARG-780 DEL; 641-GLN--ARG-780 DEL; 687-SER--ARG-780 DEL AND PRO-699</scope>
    <scope>INVOLVEMENT IN NEDHFBA</scope>
</reference>
<proteinExistence type="evidence at protein level"/>
<organism>
    <name type="scientific">Homo sapiens</name>
    <name type="common">Human</name>
    <dbReference type="NCBI Taxonomy" id="9606"/>
    <lineage>
        <taxon>Eukaryota</taxon>
        <taxon>Metazoa</taxon>
        <taxon>Chordata</taxon>
        <taxon>Craniata</taxon>
        <taxon>Vertebrata</taxon>
        <taxon>Euteleostomi</taxon>
        <taxon>Mammalia</taxon>
        <taxon>Eutheria</taxon>
        <taxon>Euarchontoglires</taxon>
        <taxon>Primates</taxon>
        <taxon>Haplorrhini</taxon>
        <taxon>Catarrhini</taxon>
        <taxon>Hominidae</taxon>
        <taxon>Homo</taxon>
    </lineage>
</organism>
<dbReference type="EMBL" id="AK172753">
    <property type="protein sequence ID" value="BAD18739.1"/>
    <property type="status" value="ALT_FRAME"/>
    <property type="molecule type" value="mRNA"/>
</dbReference>
<dbReference type="EMBL" id="AK172762">
    <property type="protein sequence ID" value="BAD18745.1"/>
    <property type="molecule type" value="mRNA"/>
</dbReference>
<dbReference type="EMBL" id="AY134855">
    <property type="protein sequence ID" value="AAN08625.1"/>
    <property type="molecule type" value="mRNA"/>
</dbReference>
<dbReference type="EMBL" id="AC093635">
    <property type="protein sequence ID" value="AAX93161.1"/>
    <property type="molecule type" value="Genomic_DNA"/>
</dbReference>
<dbReference type="EMBL" id="CH471053">
    <property type="protein sequence ID" value="EAX00200.1"/>
    <property type="molecule type" value="Genomic_DNA"/>
</dbReference>
<dbReference type="EMBL" id="BC011978">
    <property type="protein sequence ID" value="AAH11978.2"/>
    <property type="status" value="ALT_INIT"/>
    <property type="molecule type" value="mRNA"/>
</dbReference>
<dbReference type="EMBL" id="BC040721">
    <property type="protein sequence ID" value="AAH40721.1"/>
    <property type="molecule type" value="mRNA"/>
</dbReference>
<dbReference type="EMBL" id="BC111059">
    <property type="protein sequence ID" value="AAI11060.1"/>
    <property type="molecule type" value="mRNA"/>
</dbReference>
<dbReference type="EMBL" id="BC117279">
    <property type="protein sequence ID" value="AAI17280.1"/>
    <property type="molecule type" value="mRNA"/>
</dbReference>
<dbReference type="EMBL" id="BC143463">
    <property type="protein sequence ID" value="AAI43464.1"/>
    <property type="molecule type" value="mRNA"/>
</dbReference>
<dbReference type="EMBL" id="BC143466">
    <property type="protein sequence ID" value="AAI43467.1"/>
    <property type="molecule type" value="mRNA"/>
</dbReference>
<dbReference type="CCDS" id="CCDS1839.1">
    <molecule id="Q6ZMI0-2"/>
</dbReference>
<dbReference type="CCDS" id="CCDS46278.1">
    <molecule id="Q6ZMI0-1"/>
</dbReference>
<dbReference type="CCDS" id="CCDS54358.1">
    <molecule id="Q6ZMI0-5"/>
</dbReference>
<dbReference type="RefSeq" id="NP_001129101.1">
    <molecule id="Q6ZMI0-1"/>
    <property type="nucleotide sequence ID" value="NM_001135629.3"/>
</dbReference>
<dbReference type="RefSeq" id="NP_001180404.1">
    <molecule id="Q6ZMI0-5"/>
    <property type="nucleotide sequence ID" value="NM_001193475.2"/>
</dbReference>
<dbReference type="RefSeq" id="NP_694539.1">
    <molecule id="Q6ZMI0-2"/>
    <property type="nucleotide sequence ID" value="NM_152994.5"/>
</dbReference>
<dbReference type="PDB" id="7ND2">
    <property type="method" value="EM"/>
    <property type="resolution" value="4.00 A"/>
    <property type="chains" value="A/B=1-780"/>
</dbReference>
<dbReference type="PDBsum" id="7ND2"/>
<dbReference type="EMDB" id="EMD-12273"/>
<dbReference type="SMR" id="Q6ZMI0"/>
<dbReference type="BioGRID" id="126187">
    <property type="interactions" value="77"/>
</dbReference>
<dbReference type="ComplexPortal" id="CPX-2540">
    <property type="entry name" value="FERRY RAB5 effector complex"/>
</dbReference>
<dbReference type="FunCoup" id="Q6ZMI0">
    <property type="interactions" value="2301"/>
</dbReference>
<dbReference type="IntAct" id="Q6ZMI0">
    <property type="interactions" value="86"/>
</dbReference>
<dbReference type="MINT" id="Q6ZMI0"/>
<dbReference type="STRING" id="9606.ENSP00000294952"/>
<dbReference type="GlyConnect" id="2064">
    <property type="glycosylation" value="2 N-Linked glycans (1 site)"/>
</dbReference>
<dbReference type="GlyCosmos" id="Q6ZMI0">
    <property type="glycosylation" value="1 site, 4 glycans"/>
</dbReference>
<dbReference type="GlyGen" id="Q6ZMI0">
    <property type="glycosylation" value="1 site, 4 N-linked glycans (1 site)"/>
</dbReference>
<dbReference type="iPTMnet" id="Q6ZMI0"/>
<dbReference type="PhosphoSitePlus" id="Q6ZMI0"/>
<dbReference type="BioMuta" id="PPP1R21"/>
<dbReference type="DMDM" id="74710533"/>
<dbReference type="jPOST" id="Q6ZMI0"/>
<dbReference type="MassIVE" id="Q6ZMI0"/>
<dbReference type="PaxDb" id="9606-ENSP00000294952"/>
<dbReference type="PeptideAtlas" id="Q6ZMI0"/>
<dbReference type="ProteomicsDB" id="67871">
    <molecule id="Q6ZMI0-1"/>
</dbReference>
<dbReference type="ProteomicsDB" id="67872">
    <molecule id="Q6ZMI0-2"/>
</dbReference>
<dbReference type="ProteomicsDB" id="67873">
    <molecule id="Q6ZMI0-3"/>
</dbReference>
<dbReference type="ProteomicsDB" id="67874">
    <molecule id="Q6ZMI0-4"/>
</dbReference>
<dbReference type="ProteomicsDB" id="67875">
    <molecule id="Q6ZMI0-5"/>
</dbReference>
<dbReference type="Pumba" id="Q6ZMI0"/>
<dbReference type="Antibodypedia" id="47409">
    <property type="antibodies" value="97 antibodies from 17 providers"/>
</dbReference>
<dbReference type="DNASU" id="129285"/>
<dbReference type="Ensembl" id="ENST00000281394.8">
    <molecule id="Q6ZMI0-2"/>
    <property type="protein sequence ID" value="ENSP00000281394.4"/>
    <property type="gene ID" value="ENSG00000162869.16"/>
</dbReference>
<dbReference type="Ensembl" id="ENST00000294952.13">
    <molecule id="Q6ZMI0-1"/>
    <property type="protein sequence ID" value="ENSP00000294952.8"/>
    <property type="gene ID" value="ENSG00000162869.16"/>
</dbReference>
<dbReference type="Ensembl" id="ENST00000449090.6">
    <molecule id="Q6ZMI0-5"/>
    <property type="protein sequence ID" value="ENSP00000415696.2"/>
    <property type="gene ID" value="ENSG00000162869.16"/>
</dbReference>
<dbReference type="GeneID" id="129285"/>
<dbReference type="KEGG" id="hsa:129285"/>
<dbReference type="MANE-Select" id="ENST00000294952.13">
    <property type="protein sequence ID" value="ENSP00000294952.8"/>
    <property type="RefSeq nucleotide sequence ID" value="NM_001135629.3"/>
    <property type="RefSeq protein sequence ID" value="NP_001129101.1"/>
</dbReference>
<dbReference type="UCSC" id="uc002rwk.4">
    <molecule id="Q6ZMI0-1"/>
    <property type="organism name" value="human"/>
</dbReference>
<dbReference type="AGR" id="HGNC:30595"/>
<dbReference type="CTD" id="129285"/>
<dbReference type="DisGeNET" id="129285"/>
<dbReference type="GeneCards" id="PPP1R21"/>
<dbReference type="HGNC" id="HGNC:30595">
    <property type="gene designation" value="PPP1R21"/>
</dbReference>
<dbReference type="HPA" id="ENSG00000162869">
    <property type="expression patterns" value="Low tissue specificity"/>
</dbReference>
<dbReference type="MalaCards" id="PPP1R21"/>
<dbReference type="MIM" id="618159">
    <property type="type" value="gene"/>
</dbReference>
<dbReference type="MIM" id="619383">
    <property type="type" value="phenotype"/>
</dbReference>
<dbReference type="neXtProt" id="NX_Q6ZMI0"/>
<dbReference type="OpenTargets" id="ENSG00000162869"/>
<dbReference type="PharmGKB" id="PA164722001"/>
<dbReference type="VEuPathDB" id="HostDB:ENSG00000162869"/>
<dbReference type="eggNOG" id="KOG4421">
    <property type="taxonomic scope" value="Eukaryota"/>
</dbReference>
<dbReference type="GeneTree" id="ENSGT00390000006820"/>
<dbReference type="HOGENOM" id="CLU_022372_0_0_1"/>
<dbReference type="InParanoid" id="Q6ZMI0"/>
<dbReference type="OMA" id="XFSQYLH"/>
<dbReference type="OrthoDB" id="5566667at2759"/>
<dbReference type="PAN-GO" id="Q6ZMI0">
    <property type="GO annotations" value="1 GO annotation based on evolutionary models"/>
</dbReference>
<dbReference type="PhylomeDB" id="Q6ZMI0"/>
<dbReference type="TreeFam" id="TF320535"/>
<dbReference type="PathwayCommons" id="Q6ZMI0"/>
<dbReference type="SignaLink" id="Q6ZMI0"/>
<dbReference type="BioGRID-ORCS" id="129285">
    <property type="hits" value="15 hits in 1155 CRISPR screens"/>
</dbReference>
<dbReference type="CD-CODE" id="FB4E32DD">
    <property type="entry name" value="Presynaptic clusters and postsynaptic densities"/>
</dbReference>
<dbReference type="ChiTaRS" id="PPP1R21">
    <property type="organism name" value="human"/>
</dbReference>
<dbReference type="GenomeRNAi" id="129285"/>
<dbReference type="Pharos" id="Q6ZMI0">
    <property type="development level" value="Tdark"/>
</dbReference>
<dbReference type="PRO" id="PR:Q6ZMI0"/>
<dbReference type="Proteomes" id="UP000005640">
    <property type="component" value="Chromosome 2"/>
</dbReference>
<dbReference type="RNAct" id="Q6ZMI0">
    <property type="molecule type" value="protein"/>
</dbReference>
<dbReference type="Bgee" id="ENSG00000162869">
    <property type="expression patterns" value="Expressed in endothelial cell and 176 other cell types or tissues"/>
</dbReference>
<dbReference type="ExpressionAtlas" id="Q6ZMI0">
    <property type="expression patterns" value="baseline and differential"/>
</dbReference>
<dbReference type="GO" id="GO:0005769">
    <property type="term" value="C:early endosome"/>
    <property type="evidence" value="ECO:0000314"/>
    <property type="project" value="UniProtKB"/>
</dbReference>
<dbReference type="GO" id="GO:0016020">
    <property type="term" value="C:membrane"/>
    <property type="evidence" value="ECO:0007005"/>
    <property type="project" value="UniProtKB"/>
</dbReference>
<dbReference type="GO" id="GO:0003723">
    <property type="term" value="F:RNA binding"/>
    <property type="evidence" value="ECO:0000314"/>
    <property type="project" value="UniProtKB"/>
</dbReference>
<dbReference type="InterPro" id="IPR040024">
    <property type="entry name" value="PPP1R21"/>
</dbReference>
<dbReference type="InterPro" id="IPR049372">
    <property type="entry name" value="PPP1R21_C"/>
</dbReference>
<dbReference type="InterPro" id="IPR019343">
    <property type="entry name" value="PPP1R21_N"/>
</dbReference>
<dbReference type="InterPro" id="IPR019348">
    <property type="entry name" value="PPP1R21_six_helix"/>
</dbReference>
<dbReference type="PANTHER" id="PTHR21448:SF0">
    <property type="entry name" value="PROTEIN PHOSPHATASE 1 REGULATORY SUBUNIT 21"/>
    <property type="match status" value="1"/>
</dbReference>
<dbReference type="PANTHER" id="PTHR21448">
    <property type="entry name" value="SMOOTH MUSCLE MYOSIN HEAVY CHAIN-RELATED"/>
    <property type="match status" value="1"/>
</dbReference>
<dbReference type="Pfam" id="PF10205">
    <property type="entry name" value="KLRAQ"/>
    <property type="match status" value="1"/>
</dbReference>
<dbReference type="Pfam" id="PF21636">
    <property type="entry name" value="PPP1R21_C"/>
    <property type="match status" value="1"/>
</dbReference>
<dbReference type="Pfam" id="PF10212">
    <property type="entry name" value="PPP1R21_helical"/>
    <property type="match status" value="1"/>
</dbReference>
<dbReference type="SMART" id="SM01254">
    <property type="entry name" value="KLRAQ"/>
    <property type="match status" value="1"/>
</dbReference>
<name>PPR21_HUMAN</name>
<keyword id="KW-0002">3D-structure</keyword>
<keyword id="KW-0025">Alternative splicing</keyword>
<keyword id="KW-0175">Coiled coil</keyword>
<keyword id="KW-0225">Disease variant</keyword>
<keyword id="KW-0967">Endosome</keyword>
<keyword id="KW-0991">Intellectual disability</keyword>
<keyword id="KW-0597">Phosphoprotein</keyword>
<keyword id="KW-1267">Proteomics identification</keyword>
<keyword id="KW-1185">Reference proteome</keyword>
<keyword id="KW-0694">RNA-binding</keyword>
<evidence type="ECO:0000250" key="1">
    <source>
        <dbReference type="UniProtKB" id="Q3TDD9"/>
    </source>
</evidence>
<evidence type="ECO:0000255" key="2"/>
<evidence type="ECO:0000256" key="3">
    <source>
        <dbReference type="SAM" id="MobiDB-lite"/>
    </source>
</evidence>
<evidence type="ECO:0000269" key="4">
    <source>
    </source>
</evidence>
<evidence type="ECO:0000269" key="5">
    <source>
    </source>
</evidence>
<evidence type="ECO:0000269" key="6">
    <source>
    </source>
</evidence>
<evidence type="ECO:0000269" key="7">
    <source>
    </source>
</evidence>
<evidence type="ECO:0000269" key="8">
    <source>
    </source>
</evidence>
<evidence type="ECO:0000269" key="9">
    <source>
    </source>
</evidence>
<evidence type="ECO:0000269" key="10">
    <source>
    </source>
</evidence>
<evidence type="ECO:0000269" key="11">
    <source>
    </source>
</evidence>
<evidence type="ECO:0000303" key="12">
    <source>
    </source>
</evidence>
<evidence type="ECO:0000303" key="13">
    <source>
    </source>
</evidence>
<evidence type="ECO:0000303" key="14">
    <source ref="2"/>
</evidence>
<evidence type="ECO:0000305" key="15"/>
<evidence type="ECO:0000305" key="16">
    <source>
    </source>
</evidence>
<evidence type="ECO:0007744" key="17">
    <source>
        <dbReference type="PDB" id="7ND2"/>
    </source>
</evidence>
<protein>
    <recommendedName>
        <fullName>Protein phosphatase 1 regulatory subunit 21</fullName>
    </recommendedName>
    <alternativeName>
        <fullName>Coiled-coil domain-containing protein 128</fullName>
    </alternativeName>
    <alternativeName>
        <fullName evidence="13">Ferry endosomal RAB5 effector complex subunit 2</fullName>
        <shortName evidence="13">Fy-2</shortName>
    </alternativeName>
    <alternativeName>
        <fullName>KLRAQ motif-containing protein 1</fullName>
    </alternativeName>
</protein>
<sequence>MASAELQGKYQKLAQEYSKLRAQNQVLKKGVVDEQANSAALKEQLKMKDQSLRKLQQEMDSLTFRNLQLAKRVELLQDELALSEPRGKKNKKSGESSSQLSQEQKSVFDEDLQKKIEENERLHIQFFEADEQHKHVEAELRSRLATLETEAAQHQAVVDGLTRKYMETIEKLQNDKAKLEVKSQTLEKEAKECRLRTEECQLQLKTLHEDLSGRLEESLSIINEKVPFNDTKYSQYNALNVPLHNRRHQLKMRDIAGQALAFVQDLVTALLNFHTYTEQRIQIFPVDSAIDTISPLNQKFSQYLHENASYVRPLEEGMLHLFESITEDTVTVLETTVKLKTFSEHLTSYICFLRKILPYQLKSLEEECESSLCTSALRARNLELSQDMKKMTAVFEKLQTYIALLALPSTEPDGLLRTNYSSVLTNVGAALHGFHDVMKDISKHYSQKAAIEHELPTATQKLITTNDCILSSVVALTNGAGKIASFFSNNLDYFIASLSYGPKAASGFISPLSAECMLQYKKKAAAYMKSLRKPLLESVPYEEALANRRILLSSTESREGLAQQVQQSLEKISKLEQEKEHWMLEAQLAKIKLEKENQRIADKLKNTGSAQLVGLAQENAAVSNTAGQDEATAKAVLEPIQSTSLIGTLTRTSDSEVPDVESREDLIKNHYMARIVELTSQLQLADSKSVHFYAECRALSKRLALAEKSKEALTEEMKLASQNISRLQDELTTTKRSYEDQLSMMSDHLCSMNETLSKQREEIDTLKMSSKGNSKKNKSR</sequence>
<comment type="function">
    <text evidence="7 9 10 16">Component of the FERRY complex (Five-subunit Endosomal Rab5 and RNA/ribosome intermediary) (PubMed:37267905, PubMed:37267906). The FERRY complex directly interacts with mRNAs and RAB5A, and functions as a RAB5A effector involved in the localization and the distribution of specific mRNAs most likely by mediating their endosomal transport. The complex recruits mRNAs and ribosomes to early endosomes through direct mRNA-interaction (PubMed:37267905). In the complex, PPP1R21 serves as a binding hub connecting all five complex subunits and mediating the binding to mRNA and early endosomes via RAB5A (PubMed:37267906). Putative regulator of protein phosphatase 1 (PP1) activity (PubMed:19389623). May play a role in the endosomal sorting process or in endosome maturation pathway (Probable) (PubMed:30520571).</text>
</comment>
<comment type="subunit">
    <text evidence="4 9 10">Component of the FERRY complex, composed of five subunits: TBCK, PPP1R21, FERRY3, CRYZL1 and GATAD1, with a ratio of 1:2:1:2:4 respectively (PubMed:37267905, PubMed:37267906). PPP1R21 serves as a binding hub connecting all five complex subunits to mediate the binding to specific mitochondrial mRNAs (PubMed:37267906). Interacts with the GTP-bound form of RAB5A (via its C-terminal region); linking the mRNP complex onto trafficking endosomes for active mRNA transport (PubMed:37267905, PubMed:37267906). Interacts with PPP1CA (PubMed:19389623).</text>
</comment>
<comment type="interaction">
    <interactant intactId="EBI-5235703">
        <id>Q6ZMI0</id>
    </interactant>
    <interactant intactId="EBI-11023114">
        <id>O95825</id>
        <label>CRYZL1</label>
    </interactant>
    <organismsDiffer>false</organismsDiffer>
    <experiments>2</experiments>
</comment>
<comment type="interaction">
    <interactant intactId="EBI-5235703">
        <id>Q6ZMI0</id>
    </interactant>
    <interactant intactId="EBI-11090973">
        <id>Q9NQ89</id>
        <label>FERRY3</label>
    </interactant>
    <organismsDiffer>false</organismsDiffer>
    <experiments>6</experiments>
</comment>
<comment type="interaction">
    <interactant intactId="EBI-5235703">
        <id>Q6ZMI0</id>
    </interactant>
    <interactant intactId="EBI-2510117">
        <id>Q6TFL4</id>
        <label>KLHL24</label>
    </interactant>
    <organismsDiffer>false</organismsDiffer>
    <experiments>2</experiments>
</comment>
<comment type="interaction">
    <interactant intactId="EBI-5235703">
        <id>Q6ZMI0</id>
    </interactant>
    <interactant intactId="EBI-399437">
        <id>P20339</id>
        <label>RAB5A</label>
    </interactant>
    <organismsDiffer>false</organismsDiffer>
    <experiments>2</experiments>
</comment>
<comment type="interaction">
    <interactant intactId="EBI-5235703">
        <id>Q6ZMI0</id>
    </interactant>
    <interactant intactId="EBI-11142401">
        <id>Q8TEA7</id>
        <label>TBCK</label>
    </interactant>
    <organismsDiffer>false</organismsDiffer>
    <experiments>2</experiments>
</comment>
<comment type="interaction">
    <interactant intactId="EBI-25835994">
        <id>Q6ZMI0-5</id>
    </interactant>
    <interactant intactId="EBI-11954292">
        <id>Q86V38</id>
        <label>ATN1</label>
    </interactant>
    <organismsDiffer>false</organismsDiffer>
    <experiments>3</experiments>
</comment>
<comment type="interaction">
    <interactant intactId="EBI-25835994">
        <id>Q6ZMI0-5</id>
    </interactant>
    <interactant intactId="EBI-930964">
        <id>P54253</id>
        <label>ATXN1</label>
    </interactant>
    <organismsDiffer>false</organismsDiffer>
    <experiments>6</experiments>
</comment>
<comment type="interaction">
    <interactant intactId="EBI-25835994">
        <id>Q6ZMI0-5</id>
    </interactant>
    <interactant intactId="EBI-10988864">
        <id>P46379-2</id>
        <label>BAG6</label>
    </interactant>
    <organismsDiffer>false</organismsDiffer>
    <experiments>3</experiments>
</comment>
<comment type="interaction">
    <interactant intactId="EBI-25835994">
        <id>Q6ZMI0-5</id>
    </interactant>
    <interactant intactId="EBI-718729">
        <id>P55212</id>
        <label>CASP6</label>
    </interactant>
    <organismsDiffer>false</organismsDiffer>
    <experiments>3</experiments>
</comment>
<comment type="interaction">
    <interactant intactId="EBI-25835994">
        <id>Q6ZMI0-5</id>
    </interactant>
    <interactant intactId="EBI-6624398">
        <id>P06307</id>
        <label>CCK</label>
    </interactant>
    <organismsDiffer>false</organismsDiffer>
    <experiments>3</experiments>
</comment>
<comment type="interaction">
    <interactant intactId="EBI-25835994">
        <id>Q6ZMI0-5</id>
    </interactant>
    <interactant intactId="EBI-6875961">
        <id>P02489</id>
        <label>CRYAA</label>
    </interactant>
    <organismsDiffer>false</organismsDiffer>
    <experiments>3</experiments>
</comment>
<comment type="interaction">
    <interactant intactId="EBI-25835994">
        <id>Q6ZMI0-5</id>
    </interactant>
    <interactant intactId="EBI-446479">
        <id>P99999</id>
        <label>CYCS</label>
    </interactant>
    <organismsDiffer>false</organismsDiffer>
    <experiments>3</experiments>
</comment>
<comment type="interaction">
    <interactant intactId="EBI-25835994">
        <id>Q6ZMI0-5</id>
    </interactant>
    <interactant intactId="EBI-395638">
        <id>O14645</id>
        <label>DNALI1</label>
    </interactant>
    <organismsDiffer>false</organismsDiffer>
    <experiments>3</experiments>
</comment>
<comment type="interaction">
    <interactant intactId="EBI-25835994">
        <id>Q6ZMI0-5</id>
    </interactant>
    <interactant intactId="EBI-2565863">
        <id>P00488</id>
        <label>F13A1</label>
    </interactant>
    <organismsDiffer>false</organismsDiffer>
    <experiments>3</experiments>
</comment>
<comment type="interaction">
    <interactant intactId="EBI-25835994">
        <id>Q6ZMI0-5</id>
    </interactant>
    <interactant intactId="EBI-348399">
        <id>P22607</id>
        <label>FGFR3</label>
    </interactant>
    <organismsDiffer>false</organismsDiffer>
    <experiments>3</experiments>
</comment>
<comment type="interaction">
    <interactant intactId="EBI-25835994">
        <id>Q6ZMI0-5</id>
    </interactant>
    <interactant intactId="EBI-744302">
        <id>P14136</id>
        <label>GFAP</label>
    </interactant>
    <organismsDiffer>false</organismsDiffer>
    <experiments>3</experiments>
</comment>
<comment type="interaction">
    <interactant intactId="EBI-25835994">
        <id>Q6ZMI0-5</id>
    </interactant>
    <interactant intactId="EBI-8285963">
        <id>Q14957</id>
        <label>GRIN2C</label>
    </interactant>
    <organismsDiffer>false</organismsDiffer>
    <experiments>3</experiments>
</comment>
<comment type="interaction">
    <interactant intactId="EBI-25835994">
        <id>Q6ZMI0-5</id>
    </interactant>
    <interactant intactId="EBI-351506">
        <id>P06396</id>
        <label>GSN</label>
    </interactant>
    <organismsDiffer>false</organismsDiffer>
    <experiments>3</experiments>
</comment>
<comment type="interaction">
    <interactant intactId="EBI-25835994">
        <id>Q6ZMI0-5</id>
    </interactant>
    <interactant intactId="EBI-517086">
        <id>O43464</id>
        <label>HTRA2</label>
    </interactant>
    <organismsDiffer>false</organismsDiffer>
    <experiments>3</experiments>
</comment>
<comment type="interaction">
    <interactant intactId="EBI-25835994">
        <id>Q6ZMI0-5</id>
    </interactant>
    <interactant intactId="EBI-466029">
        <id>P42858</id>
        <label>HTT</label>
    </interactant>
    <organismsDiffer>false</organismsDiffer>
    <experiments>9</experiments>
</comment>
<comment type="interaction">
    <interactant intactId="EBI-25835994">
        <id>Q6ZMI0-5</id>
    </interactant>
    <interactant intactId="EBI-1055254">
        <id>Q8WXH2</id>
        <label>JPH3</label>
    </interactant>
    <organismsDiffer>false</organismsDiffer>
    <experiments>3</experiments>
</comment>
<comment type="interaction">
    <interactant intactId="EBI-25835994">
        <id>Q6ZMI0-5</id>
    </interactant>
    <interactant intactId="EBI-948266">
        <id>O14901</id>
        <label>KLF11</label>
    </interactant>
    <organismsDiffer>false</organismsDiffer>
    <experiments>3</experiments>
</comment>
<comment type="interaction">
    <interactant intactId="EBI-25835994">
        <id>Q6ZMI0-5</id>
    </interactant>
    <interactant intactId="EBI-2432309">
        <id>Q92876</id>
        <label>KLK6</label>
    </interactant>
    <organismsDiffer>false</organismsDiffer>
    <experiments>3</experiments>
</comment>
<comment type="interaction">
    <interactant intactId="EBI-25835994">
        <id>Q6ZMI0-5</id>
    </interactant>
    <interactant intactId="EBI-21591415">
        <id>P13473-2</id>
        <label>LAMP2</label>
    </interactant>
    <organismsDiffer>false</organismsDiffer>
    <experiments>3</experiments>
</comment>
<comment type="interaction">
    <interactant intactId="EBI-25835994">
        <id>Q6ZMI0-5</id>
    </interactant>
    <interactant intactId="EBI-713665">
        <id>P19404</id>
        <label>NDUFV2</label>
    </interactant>
    <organismsDiffer>false</organismsDiffer>
    <experiments>3</experiments>
</comment>
<comment type="interaction">
    <interactant intactId="EBI-25835994">
        <id>Q6ZMI0-5</id>
    </interactant>
    <interactant intactId="EBI-1391623">
        <id>P29474</id>
        <label>NOS3</label>
    </interactant>
    <organismsDiffer>false</organismsDiffer>
    <experiments>3</experiments>
</comment>
<comment type="interaction">
    <interactant intactId="EBI-25835994">
        <id>Q6ZMI0-5</id>
    </interactant>
    <interactant intactId="EBI-2811583">
        <id>Q9BVL2</id>
        <label>NUP58</label>
    </interactant>
    <organismsDiffer>false</organismsDiffer>
    <experiments>3</experiments>
</comment>
<comment type="interaction">
    <interactant intactId="EBI-25835994">
        <id>Q6ZMI0-5</id>
    </interactant>
    <interactant intactId="EBI-50433196">
        <id>A0A6Q8PF08</id>
        <label>PMP22</label>
    </interactant>
    <organismsDiffer>false</organismsDiffer>
    <experiments>3</experiments>
</comment>
<comment type="interaction">
    <interactant intactId="EBI-25835994">
        <id>Q6ZMI0-5</id>
    </interactant>
    <interactant intactId="EBI-5280197">
        <id>O75400-2</id>
        <label>PRPF40A</label>
    </interactant>
    <organismsDiffer>false</organismsDiffer>
    <experiments>3</experiments>
</comment>
<comment type="interaction">
    <interactant intactId="EBI-25835994">
        <id>Q6ZMI0-5</id>
    </interactant>
    <interactant intactId="EBI-286642">
        <id>P62826</id>
        <label>RAN</label>
    </interactant>
    <organismsDiffer>false</organismsDiffer>
    <experiments>3</experiments>
</comment>
<comment type="interaction">
    <interactant intactId="EBI-25835994">
        <id>Q6ZMI0-5</id>
    </interactant>
    <interactant intactId="EBI-2623095">
        <id>Q9Y371</id>
        <label>SH3GLB1</label>
    </interactant>
    <organismsDiffer>false</organismsDiffer>
    <experiments>3</experiments>
</comment>
<comment type="interaction">
    <interactant intactId="EBI-25835994">
        <id>Q6ZMI0-5</id>
    </interactant>
    <interactant intactId="EBI-372899">
        <id>Q13148</id>
        <label>TARDBP</label>
    </interactant>
    <organismsDiffer>false</organismsDiffer>
    <experiments>6</experiments>
</comment>
<comment type="subcellular location">
    <subcellularLocation>
        <location evidence="7 9">Early endosome</location>
    </subcellularLocation>
</comment>
<comment type="alternative products">
    <event type="alternative splicing"/>
    <isoform>
        <id>Q6ZMI0-1</id>
        <name>1</name>
        <sequence type="displayed"/>
    </isoform>
    <isoform>
        <id>Q6ZMI0-2</id>
        <name>2</name>
        <sequence type="described" ref="VSP_024987"/>
    </isoform>
    <isoform>
        <id>Q6ZMI0-5</id>
        <name>5</name>
        <sequence type="described" ref="VSP_043216 VSP_024987"/>
    </isoform>
    <isoform>
        <id>Q6ZMI0-3</id>
        <name>3</name>
        <sequence type="described" ref="VSP_024985 VSP_024986"/>
    </isoform>
    <isoform>
        <id>Q6ZMI0-4</id>
        <name>4</name>
        <sequence type="described" ref="VSP_024984"/>
    </isoform>
</comment>
<comment type="domain">
    <text evidence="10">Coiled-coil domains of PPP1R21 are essential for RNA binding.</text>
</comment>
<comment type="disease" evidence="5 6 7 8 10 11">
    <disease id="DI-06138">
        <name>Neurodevelopmental disorder with hypotonia, facial dysmorphism, and brain abnormalities</name>
        <acronym>NEDHFBA</acronym>
        <description>An autosomal recessive disorder characterized by global developmental delay, severely impaired intellectual development, hypotonia, coarse facial features, and muscle weakness, often resulting in the inability to walk or sit. Additional features include feeding difficulties, respiratory distress, scoliosis, poor visual function, and rotary nystagmus. Brain imaging shows variable abnormalities, including enlarged ventricles, decreased white matter volume, white matter changes, thin corpus callosum, and cerebellar hypoplasia.</description>
        <dbReference type="MIM" id="619383"/>
    </disease>
    <text>The disease is caused by variants affecting the gene represented in this entry.</text>
</comment>
<comment type="sequence caution" evidence="15">
    <conflict type="erroneous initiation">
        <sequence resource="EMBL-CDS" id="AAH11978"/>
    </conflict>
</comment>
<comment type="sequence caution" evidence="15">
    <conflict type="frameshift">
        <sequence resource="EMBL-CDS" id="BAD18739"/>
    </conflict>
</comment>
<feature type="chain" id="PRO_0000286098" description="Protein phosphatase 1 regulatory subunit 21">
    <location>
        <begin position="1"/>
        <end position="780"/>
    </location>
</feature>
<feature type="region of interest" description="Disordered" evidence="3">
    <location>
        <begin position="84"/>
        <end position="104"/>
    </location>
</feature>
<feature type="region of interest" description="Disordered" evidence="3">
    <location>
        <begin position="760"/>
        <end position="780"/>
    </location>
</feature>
<feature type="coiled-coil region" evidence="2">
    <location>
        <begin position="1"/>
        <end position="207"/>
    </location>
</feature>
<feature type="coiled-coil region" evidence="2">
    <location>
        <begin position="556"/>
        <end position="607"/>
    </location>
</feature>
<feature type="coiled-coil region" evidence="2">
    <location>
        <begin position="693"/>
        <end position="742"/>
    </location>
</feature>
<feature type="compositionally biased region" description="Low complexity" evidence="3">
    <location>
        <begin position="95"/>
        <end position="104"/>
    </location>
</feature>
<feature type="modified residue" description="Phosphothreonine" evidence="1">
    <location>
        <position position="652"/>
    </location>
</feature>
<feature type="splice variant" id="VSP_024984" description="In isoform 4." evidence="12">
    <location>
        <begin position="363"/>
        <end position="779"/>
    </location>
</feature>
<feature type="splice variant" id="VSP_043216" description="In isoform 5." evidence="12">
    <location>
        <begin position="534"/>
        <end position="564"/>
    </location>
</feature>
<feature type="splice variant" id="VSP_024985" description="In isoform 3." evidence="12">
    <original>QQSLEKISK</original>
    <variation>WHWENYGNC</variation>
    <location>
        <begin position="566"/>
        <end position="574"/>
    </location>
</feature>
<feature type="splice variant" id="VSP_024986" description="In isoform 3." evidence="12">
    <location>
        <begin position="575"/>
        <end position="780"/>
    </location>
</feature>
<feature type="splice variant" id="VSP_024987" description="In isoform 2 and isoform 5." evidence="12 14">
    <location>
        <begin position="646"/>
        <end position="656"/>
    </location>
</feature>
<feature type="sequence variant" id="VAR_085954" description="In NEDHFBA; likely pathogenic." evidence="8">
    <location>
        <begin position="65"/>
        <end position="780"/>
    </location>
</feature>
<feature type="sequence variant" id="VAR_090228" description="In NEDHFBA; uncertain significance." evidence="11">
    <original>L</original>
    <variation>R</variation>
    <location>
        <position position="75"/>
    </location>
</feature>
<feature type="sequence variant" id="VAR_082035" description="In NEDHFBA; likely pathogenic." evidence="6 11">
    <location>
        <begin position="143"/>
        <end position="780"/>
    </location>
</feature>
<feature type="sequence variant" id="VAR_090229" description="In NEDHFBA; likely pathogenic." evidence="11">
    <location>
        <begin position="641"/>
        <end position="780"/>
    </location>
</feature>
<feature type="sequence variant" id="VAR_090230" description="In NEDHFBA." evidence="11">
    <location>
        <begin position="687"/>
        <end position="780"/>
    </location>
</feature>
<feature type="sequence variant" id="VAR_082036" description="In NEDHFBA; likely pathogenic; abolishes interaction with RAB5A; impaired FERRY complex assembly; does not affect FERRY complex binding to mRNA." evidence="6 10">
    <location>
        <begin position="697"/>
        <end position="780"/>
    </location>
</feature>
<feature type="sequence variant" id="VAR_090231" description="In NEDHFBA; uncertain significance." evidence="11">
    <original>L</original>
    <variation>P</variation>
    <location>
        <position position="699"/>
    </location>
</feature>
<feature type="sequence variant" id="VAR_084655" description="In NEDHFBA; uncertain significance; decreases interaction with RAB5A; does not affect FERRY complex assembly; does not affect FERRY complex binding to mRNA." evidence="5 10">
    <location>
        <begin position="728"/>
        <end position="780"/>
    </location>
</feature>
<feature type="sequence conflict" description="In Ref. 1; BAD18739." evidence="15" ref="1">
    <original>Q</original>
    <variation>R</variation>
    <location>
        <position position="235"/>
    </location>
</feature>
<feature type="sequence conflict" description="In Ref. 1; BAD18739." evidence="15" ref="1">
    <original>L</original>
    <variation>S</variation>
    <location>
        <position position="476"/>
    </location>
</feature>
<feature type="sequence conflict" description="In Ref. 1; BAD18739." evidence="15" ref="1">
    <original>H</original>
    <variation>R</variation>
    <location>
        <position position="670"/>
    </location>
</feature>
<accession>Q6ZMI0</accession>
<accession>B7ZKY5</accession>
<accession>B7ZKY7</accession>
<accession>E1B6W7</accession>
<accession>Q2TA78</accession>
<accession>Q6ZMI6</accession>
<accession>Q8IW83</accession>
<accession>Q8J029</accession>
<accession>Q96ES8</accession>
<gene>
    <name type="primary">PPP1R21</name>
    <name type="synonym">CCDC128</name>
    <name evidence="13" type="synonym">FERRY2</name>
    <name type="synonym">KLRAQ1</name>
</gene>